<protein>
    <recommendedName>
        <fullName>Naringenin,2-oxoglutarate 3-dioxygenase</fullName>
        <ecNumber evidence="1">1.14.11.9</ecNumber>
    </recommendedName>
    <alternativeName>
        <fullName>FHT</fullName>
    </alternativeName>
    <alternativeName>
        <fullName>Flavanone-3-hydroxylase</fullName>
        <shortName>F3H</shortName>
    </alternativeName>
</protein>
<dbReference type="EC" id="1.14.11.9" evidence="1"/>
<dbReference type="EMBL" id="X69664">
    <property type="protein sequence ID" value="CAA49353.1"/>
    <property type="molecule type" value="mRNA"/>
</dbReference>
<dbReference type="EMBL" id="AF117270">
    <property type="protein sequence ID" value="AAD26206.1"/>
    <property type="molecule type" value="mRNA"/>
</dbReference>
<dbReference type="PIR" id="S31458">
    <property type="entry name" value="S31458"/>
</dbReference>
<dbReference type="SMR" id="Q06942"/>
<dbReference type="UniPathway" id="UPA00154"/>
<dbReference type="GO" id="GO:0045486">
    <property type="term" value="F:flavanone 3-dioxygenase activity"/>
    <property type="evidence" value="ECO:0007669"/>
    <property type="project" value="UniProtKB-EC"/>
</dbReference>
<dbReference type="GO" id="GO:0031418">
    <property type="term" value="F:L-ascorbic acid binding"/>
    <property type="evidence" value="ECO:0007669"/>
    <property type="project" value="UniProtKB-KW"/>
</dbReference>
<dbReference type="GO" id="GO:0046872">
    <property type="term" value="F:metal ion binding"/>
    <property type="evidence" value="ECO:0007669"/>
    <property type="project" value="UniProtKB-KW"/>
</dbReference>
<dbReference type="GO" id="GO:0009813">
    <property type="term" value="P:flavonoid biosynthetic process"/>
    <property type="evidence" value="ECO:0007669"/>
    <property type="project" value="UniProtKB-UniPathway"/>
</dbReference>
<dbReference type="FunFam" id="2.60.120.330:FF:000016">
    <property type="entry name" value="Naringenin,2-oxoglutarate 3-dioxygenase"/>
    <property type="match status" value="1"/>
</dbReference>
<dbReference type="Gene3D" id="2.60.120.330">
    <property type="entry name" value="B-lactam Antibiotic, Isopenicillin N Synthase, Chain"/>
    <property type="match status" value="1"/>
</dbReference>
<dbReference type="InterPro" id="IPR026992">
    <property type="entry name" value="DIOX_N"/>
</dbReference>
<dbReference type="InterPro" id="IPR044861">
    <property type="entry name" value="IPNS-like_FE2OG_OXY"/>
</dbReference>
<dbReference type="InterPro" id="IPR027443">
    <property type="entry name" value="IPNS-like_sf"/>
</dbReference>
<dbReference type="InterPro" id="IPR005123">
    <property type="entry name" value="Oxoglu/Fe-dep_dioxygenase_dom"/>
</dbReference>
<dbReference type="InterPro" id="IPR050295">
    <property type="entry name" value="Plant_2OG-oxidoreductases"/>
</dbReference>
<dbReference type="PANTHER" id="PTHR47991">
    <property type="entry name" value="OXOGLUTARATE/IRON-DEPENDENT DIOXYGENASE"/>
    <property type="match status" value="1"/>
</dbReference>
<dbReference type="Pfam" id="PF03171">
    <property type="entry name" value="2OG-FeII_Oxy"/>
    <property type="match status" value="1"/>
</dbReference>
<dbReference type="Pfam" id="PF14226">
    <property type="entry name" value="DIOX_N"/>
    <property type="match status" value="1"/>
</dbReference>
<dbReference type="SUPFAM" id="SSF51197">
    <property type="entry name" value="Clavaminate synthase-like"/>
    <property type="match status" value="1"/>
</dbReference>
<dbReference type="PROSITE" id="PS51471">
    <property type="entry name" value="FE2OG_OXY"/>
    <property type="match status" value="1"/>
</dbReference>
<reference key="1">
    <citation type="journal article" date="1993" name="Plant Physiol.">
        <title>A cDNA clone for flavanone 3-hydroxylase from Malus.</title>
        <authorList>
            <person name="Davies K.M."/>
        </authorList>
    </citation>
    <scope>NUCLEOTIDE SEQUENCE [MRNA]</scope>
    <source>
        <tissue>Leaf</tissue>
    </source>
</reference>
<reference key="2">
    <citation type="submission" date="1998-12" db="EMBL/GenBank/DDBJ databases">
        <title>Molecular cloning and expression of anthocyanin biosynthesis genes from 'Fuji apple'.</title>
        <authorList>
            <person name="Lee J.-R."/>
            <person name="Hong S.-T."/>
            <person name="Yoo Y.G."/>
            <person name="Kim S.-R."/>
        </authorList>
    </citation>
    <scope>NUCLEOTIDE SEQUENCE [MRNA]</scope>
    <source>
        <strain>cv. Fuji</strain>
        <tissue>Peelings</tissue>
    </source>
</reference>
<accession>Q06942</accession>
<sequence length="364" mass="40771">MAPATTLTSIAHEKTLQQKFVRDEDERPKVAYNDFSNEIPIISLAGIDEVEGRRGEICKKIVAACEDWGIFQIVDHGVDAELISEMTGLAREFFALPSEEKLRFDMSGGKKGGFIVSSHLQGEAVQDWREIVTYFSYPIRHRDYSRWPDKPEAWREVTKKYSDELMGLACKLLGVLSEAMGLDTEALTKACVDMDQKVVVNFYPKCPQPDLTLGLKRHTDPGTITLLLQDQVGGLQATRDDGKTWITVQPVEGAFVVNLGDHGHLLSNGRFKNADHQAVVNSNSSRLSIATFQNPAQEAIVYPLSVREGEKPILEAPITYTEMYKKKMSKDLELARLKKLAKEQQSQDLEKAKVDTKPVDDIFA</sequence>
<feature type="chain" id="PRO_0000067287" description="Naringenin,2-oxoglutarate 3-dioxygenase">
    <location>
        <begin position="1"/>
        <end position="364"/>
    </location>
</feature>
<feature type="domain" description="Fe2OG dioxygenase" evidence="2">
    <location>
        <begin position="191"/>
        <end position="295"/>
    </location>
</feature>
<feature type="region of interest" description="Disordered" evidence="3">
    <location>
        <begin position="343"/>
        <end position="364"/>
    </location>
</feature>
<feature type="compositionally biased region" description="Basic and acidic residues" evidence="3">
    <location>
        <begin position="348"/>
        <end position="364"/>
    </location>
</feature>
<feature type="binding site" evidence="2">
    <location>
        <position position="218"/>
    </location>
    <ligand>
        <name>Fe cation</name>
        <dbReference type="ChEBI" id="CHEBI:24875"/>
    </ligand>
</feature>
<feature type="binding site" evidence="2">
    <location>
        <position position="220"/>
    </location>
    <ligand>
        <name>Fe cation</name>
        <dbReference type="ChEBI" id="CHEBI:24875"/>
    </ligand>
</feature>
<feature type="binding site" evidence="2">
    <location>
        <position position="276"/>
    </location>
    <ligand>
        <name>Fe cation</name>
        <dbReference type="ChEBI" id="CHEBI:24875"/>
    </ligand>
</feature>
<feature type="binding site" evidence="2">
    <location>
        <position position="286"/>
    </location>
    <ligand>
        <name>2-oxoglutarate</name>
        <dbReference type="ChEBI" id="CHEBI:16810"/>
    </ligand>
</feature>
<keyword id="KW-0223">Dioxygenase</keyword>
<keyword id="KW-0284">Flavonoid biosynthesis</keyword>
<keyword id="KW-0408">Iron</keyword>
<keyword id="KW-0479">Metal-binding</keyword>
<keyword id="KW-0560">Oxidoreductase</keyword>
<keyword id="KW-0847">Vitamin C</keyword>
<evidence type="ECO:0000250" key="1">
    <source>
        <dbReference type="UniProtKB" id="Q7XZQ7"/>
    </source>
</evidence>
<evidence type="ECO:0000255" key="2">
    <source>
        <dbReference type="PROSITE-ProRule" id="PRU00805"/>
    </source>
</evidence>
<evidence type="ECO:0000256" key="3">
    <source>
        <dbReference type="SAM" id="MobiDB-lite"/>
    </source>
</evidence>
<evidence type="ECO:0000305" key="4"/>
<organism>
    <name type="scientific">Malus domestica</name>
    <name type="common">Apple</name>
    <name type="synonym">Pyrus malus</name>
    <dbReference type="NCBI Taxonomy" id="3750"/>
    <lineage>
        <taxon>Eukaryota</taxon>
        <taxon>Viridiplantae</taxon>
        <taxon>Streptophyta</taxon>
        <taxon>Embryophyta</taxon>
        <taxon>Tracheophyta</taxon>
        <taxon>Spermatophyta</taxon>
        <taxon>Magnoliopsida</taxon>
        <taxon>eudicotyledons</taxon>
        <taxon>Gunneridae</taxon>
        <taxon>Pentapetalae</taxon>
        <taxon>rosids</taxon>
        <taxon>fabids</taxon>
        <taxon>Rosales</taxon>
        <taxon>Rosaceae</taxon>
        <taxon>Amygdaloideae</taxon>
        <taxon>Maleae</taxon>
        <taxon>Malus</taxon>
    </lineage>
</organism>
<comment type="function">
    <text>Catalyzes the 3-beta-hydroxylation of 2S-flavanones to 2R,3R-dihydroflavonols which are intermediates in the biosynthesis of flavonols, anthocyanidins, catechins and proanthocyanidins in plants.</text>
</comment>
<comment type="catalytic activity">
    <reaction evidence="1">
        <text>a (2S)-flavan-4-one + 2-oxoglutarate + O2 = a (2R,3R)-dihydroflavonol + succinate + CO2</text>
        <dbReference type="Rhea" id="RHEA:18621"/>
        <dbReference type="ChEBI" id="CHEBI:15379"/>
        <dbReference type="ChEBI" id="CHEBI:16526"/>
        <dbReference type="ChEBI" id="CHEBI:16810"/>
        <dbReference type="ChEBI" id="CHEBI:30031"/>
        <dbReference type="ChEBI" id="CHEBI:138188"/>
        <dbReference type="ChEBI" id="CHEBI:140377"/>
        <dbReference type="EC" id="1.14.11.9"/>
    </reaction>
</comment>
<comment type="cofactor">
    <cofactor evidence="2">
        <name>Fe(2+)</name>
        <dbReference type="ChEBI" id="CHEBI:29033"/>
    </cofactor>
    <text evidence="2">Binds 1 Fe(2+) ion per subunit.</text>
</comment>
<comment type="cofactor">
    <cofactor>
        <name>L-ascorbate</name>
        <dbReference type="ChEBI" id="CHEBI:38290"/>
    </cofactor>
</comment>
<comment type="pathway">
    <text>Secondary metabolite biosynthesis; flavonoid biosynthesis.</text>
</comment>
<comment type="similarity">
    <text evidence="4">Belongs to the iron/ascorbate-dependent oxidoreductase family.</text>
</comment>
<proteinExistence type="evidence at transcript level"/>
<name>FL3H_MALDO</name>